<evidence type="ECO:0000255" key="1">
    <source>
        <dbReference type="HAMAP-Rule" id="MF_01522"/>
    </source>
</evidence>
<proteinExistence type="inferred from homology"/>
<protein>
    <recommendedName>
        <fullName evidence="1">Probable potassium transport system protein Kup 2</fullName>
    </recommendedName>
</protein>
<name>KUP2_CUPNH</name>
<accession>Q0K2K6</accession>
<reference key="1">
    <citation type="journal article" date="2006" name="Nat. Biotechnol.">
        <title>Genome sequence of the bioplastic-producing 'Knallgas' bacterium Ralstonia eutropha H16.</title>
        <authorList>
            <person name="Pohlmann A."/>
            <person name="Fricke W.F."/>
            <person name="Reinecke F."/>
            <person name="Kusian B."/>
            <person name="Liesegang H."/>
            <person name="Cramm R."/>
            <person name="Eitinger T."/>
            <person name="Ewering C."/>
            <person name="Poetter M."/>
            <person name="Schwartz E."/>
            <person name="Strittmatter A."/>
            <person name="Voss I."/>
            <person name="Gottschalk G."/>
            <person name="Steinbuechel A."/>
            <person name="Friedrich B."/>
            <person name="Bowien B."/>
        </authorList>
    </citation>
    <scope>NUCLEOTIDE SEQUENCE [LARGE SCALE GENOMIC DNA]</scope>
    <source>
        <strain>ATCC 17699 / DSM 428 / KCTC 22496 / NCIMB 10442 / H16 / Stanier 337</strain>
    </source>
</reference>
<comment type="function">
    <text evidence="1">Transport of potassium into the cell. Likely operates as a K(+):H(+) symporter.</text>
</comment>
<comment type="catalytic activity">
    <reaction evidence="1">
        <text>K(+)(in) + H(+)(in) = K(+)(out) + H(+)(out)</text>
        <dbReference type="Rhea" id="RHEA:28490"/>
        <dbReference type="ChEBI" id="CHEBI:15378"/>
        <dbReference type="ChEBI" id="CHEBI:29103"/>
    </reaction>
    <physiologicalReaction direction="right-to-left" evidence="1">
        <dbReference type="Rhea" id="RHEA:28492"/>
    </physiologicalReaction>
</comment>
<comment type="subcellular location">
    <subcellularLocation>
        <location evidence="1">Cell inner membrane</location>
        <topology evidence="1">Multi-pass membrane protein</topology>
    </subcellularLocation>
</comment>
<comment type="similarity">
    <text evidence="1">Belongs to the HAK/KUP transporter (TC 2.A.72) family.</text>
</comment>
<organism>
    <name type="scientific">Cupriavidus necator (strain ATCC 17699 / DSM 428 / KCTC 22496 / NCIMB 10442 / H16 / Stanier 337)</name>
    <name type="common">Ralstonia eutropha</name>
    <dbReference type="NCBI Taxonomy" id="381666"/>
    <lineage>
        <taxon>Bacteria</taxon>
        <taxon>Pseudomonadati</taxon>
        <taxon>Pseudomonadota</taxon>
        <taxon>Betaproteobacteria</taxon>
        <taxon>Burkholderiales</taxon>
        <taxon>Burkholderiaceae</taxon>
        <taxon>Cupriavidus</taxon>
    </lineage>
</organism>
<keyword id="KW-0997">Cell inner membrane</keyword>
<keyword id="KW-1003">Cell membrane</keyword>
<keyword id="KW-0406">Ion transport</keyword>
<keyword id="KW-0472">Membrane</keyword>
<keyword id="KW-0630">Potassium</keyword>
<keyword id="KW-0633">Potassium transport</keyword>
<keyword id="KW-1185">Reference proteome</keyword>
<keyword id="KW-0769">Symport</keyword>
<keyword id="KW-0812">Transmembrane</keyword>
<keyword id="KW-1133">Transmembrane helix</keyword>
<keyword id="KW-0813">Transport</keyword>
<feature type="chain" id="PRO_0000279815" description="Probable potassium transport system protein Kup 2">
    <location>
        <begin position="1"/>
        <end position="633"/>
    </location>
</feature>
<feature type="transmembrane region" description="Helical" evidence="1">
    <location>
        <begin position="59"/>
        <end position="79"/>
    </location>
</feature>
<feature type="transmembrane region" description="Helical" evidence="1">
    <location>
        <begin position="110"/>
        <end position="130"/>
    </location>
</feature>
<feature type="transmembrane region" description="Helical" evidence="1">
    <location>
        <begin position="145"/>
        <end position="165"/>
    </location>
</feature>
<feature type="transmembrane region" description="Helical" evidence="1">
    <location>
        <begin position="173"/>
        <end position="193"/>
    </location>
</feature>
<feature type="transmembrane region" description="Helical" evidence="1">
    <location>
        <begin position="219"/>
        <end position="239"/>
    </location>
</feature>
<feature type="transmembrane region" description="Helical" evidence="1">
    <location>
        <begin position="256"/>
        <end position="276"/>
    </location>
</feature>
<feature type="transmembrane region" description="Helical" evidence="1">
    <location>
        <begin position="287"/>
        <end position="307"/>
    </location>
</feature>
<feature type="transmembrane region" description="Helical" evidence="1">
    <location>
        <begin position="345"/>
        <end position="365"/>
    </location>
</feature>
<feature type="transmembrane region" description="Helical" evidence="1">
    <location>
        <begin position="374"/>
        <end position="394"/>
    </location>
</feature>
<feature type="transmembrane region" description="Helical" evidence="1">
    <location>
        <begin position="402"/>
        <end position="422"/>
    </location>
</feature>
<feature type="transmembrane region" description="Helical" evidence="1">
    <location>
        <begin position="429"/>
        <end position="449"/>
    </location>
</feature>
<gene>
    <name evidence="1" type="primary">kup2</name>
    <name type="ordered locus">H16_B0977</name>
</gene>
<sequence length="633" mass="67011">MNGETPDASHPQQSRAELTLAALGVVYGDIGTSPLYAVKETFNPAHGIPLVTENILGGISAILWALMVVVSLKYVILIMRANNRGEGGIMALLALALSSVKKVGRSPTPILLVGLFGAALFYGDAVLTPAMSVLSALEGIEVGTTALQPYVLPASVGVLIALFLFQRHGTAAIGALFGPVTIVWFLALAAAGIHGIARYPAILGALSPLHALGFVTQHGFASFAVLGAVLLAFTGAEALYADMGHFGSAPIRLAWFGLVFPALALNYLGQGALIIVNAKAIENPFYLLYPSWALYPMVALATAATVIASQATISGAYSLTKQGIQLGYLPRMNVVHTSERAIGQIYIPTLNGMLLVAVLVAVLGFGSSSNLASAYGVAVTGTMLVTTLLTFFVIHYGWRYNLLLSLVATGFFIAVDMAFVSSSLLKVAEGGWFPLVVGAGIFVVMLTWVRGRQALLERLQSTDVPLKSFLDSLFLAPPPRVPGTAVFLTPTPDVVPHALMHNLNHNRVLHERVVFLTVKMKDVPSVPATECAAVEPLGHACYRITLRFGFMNRPDVAQALGALPPAAGLEFDIMDTSFFLSREAIVAAAGGPSGMASWRERLFATMSRNAGNAADYFNIPANRVIEIGTQIKI</sequence>
<dbReference type="EMBL" id="AM260480">
    <property type="protein sequence ID" value="CAJ95768.1"/>
    <property type="molecule type" value="Genomic_DNA"/>
</dbReference>
<dbReference type="RefSeq" id="WP_011616928.1">
    <property type="nucleotide sequence ID" value="NC_008314.1"/>
</dbReference>
<dbReference type="STRING" id="381666.H16_B0977"/>
<dbReference type="KEGG" id="reh:H16_B0977"/>
<dbReference type="eggNOG" id="COG3158">
    <property type="taxonomic scope" value="Bacteria"/>
</dbReference>
<dbReference type="HOGENOM" id="CLU_008142_4_2_4"/>
<dbReference type="OrthoDB" id="9805577at2"/>
<dbReference type="Proteomes" id="UP000008210">
    <property type="component" value="Chromosome 2"/>
</dbReference>
<dbReference type="GO" id="GO:0005886">
    <property type="term" value="C:plasma membrane"/>
    <property type="evidence" value="ECO:0007669"/>
    <property type="project" value="UniProtKB-SubCell"/>
</dbReference>
<dbReference type="GO" id="GO:0015079">
    <property type="term" value="F:potassium ion transmembrane transporter activity"/>
    <property type="evidence" value="ECO:0007669"/>
    <property type="project" value="UniProtKB-UniRule"/>
</dbReference>
<dbReference type="GO" id="GO:0015293">
    <property type="term" value="F:symporter activity"/>
    <property type="evidence" value="ECO:0007669"/>
    <property type="project" value="UniProtKB-UniRule"/>
</dbReference>
<dbReference type="HAMAP" id="MF_01522">
    <property type="entry name" value="Kup"/>
    <property type="match status" value="1"/>
</dbReference>
<dbReference type="InterPro" id="IPR003855">
    <property type="entry name" value="K+_transporter"/>
</dbReference>
<dbReference type="InterPro" id="IPR053952">
    <property type="entry name" value="K_trans_C"/>
</dbReference>
<dbReference type="InterPro" id="IPR053951">
    <property type="entry name" value="K_trans_N"/>
</dbReference>
<dbReference type="InterPro" id="IPR023051">
    <property type="entry name" value="Kup"/>
</dbReference>
<dbReference type="PANTHER" id="PTHR30540:SF79">
    <property type="entry name" value="LOW AFFINITY POTASSIUM TRANSPORT SYSTEM PROTEIN KUP"/>
    <property type="match status" value="1"/>
</dbReference>
<dbReference type="PANTHER" id="PTHR30540">
    <property type="entry name" value="OSMOTIC STRESS POTASSIUM TRANSPORTER"/>
    <property type="match status" value="1"/>
</dbReference>
<dbReference type="Pfam" id="PF02705">
    <property type="entry name" value="K_trans"/>
    <property type="match status" value="1"/>
</dbReference>
<dbReference type="Pfam" id="PF22776">
    <property type="entry name" value="K_trans_C"/>
    <property type="match status" value="1"/>
</dbReference>